<name>IYD1_PIG</name>
<organism>
    <name type="scientific">Sus scrofa</name>
    <name type="common">Pig</name>
    <dbReference type="NCBI Taxonomy" id="9823"/>
    <lineage>
        <taxon>Eukaryota</taxon>
        <taxon>Metazoa</taxon>
        <taxon>Chordata</taxon>
        <taxon>Craniata</taxon>
        <taxon>Vertebrata</taxon>
        <taxon>Euteleostomi</taxon>
        <taxon>Mammalia</taxon>
        <taxon>Eutheria</taxon>
        <taxon>Laurasiatheria</taxon>
        <taxon>Artiodactyla</taxon>
        <taxon>Suina</taxon>
        <taxon>Suidae</taxon>
        <taxon>Sus</taxon>
    </lineage>
</organism>
<evidence type="ECO:0000250" key="1">
    <source>
        <dbReference type="UniProtKB" id="Q6PHW0"/>
    </source>
</evidence>
<evidence type="ECO:0000250" key="2">
    <source>
        <dbReference type="UniProtKB" id="Q9DCX8"/>
    </source>
</evidence>
<evidence type="ECO:0000255" key="3"/>
<evidence type="ECO:0000269" key="4">
    <source>
    </source>
</evidence>
<evidence type="ECO:0000303" key="5">
    <source>
    </source>
</evidence>
<evidence type="ECO:0000305" key="6"/>
<sequence length="289" mass="33462">MFLLTPVLVAVVCILMVWIFKNADGATKRREEEPRARAEARPWVDEDLKDSTDVLQVEEDADEWQESEEEVEHVPFSHTRYPEKEMVRRSQEFYELLNKRRSVRFISNERVPMEVIDNVIKAAGTAPSGAHTEPWTFVVVKDPDVKHRIREIMEEEEKINYLKRMGPRWVTDLKKLRTNWIKEYWDTAPVLILIFKQVHGFAANGKKKIHYYNEISVSIACGIFLAALQNAGLVTVTTTPFNCGPRLRVFLNRPANEKLLMFLPVGYPSKEATVPDLPRKPLDQIMVTV</sequence>
<comment type="function">
    <text evidence="1 4">Catalyzes the dehalogenation of halotyrosines such as 3-bromo-L-tyrosine, 3-chloro-L-tyrosine, 3-iodo-L-tyrosine and 3,5-diiodo-L-tyrosine (By similarity). During thyroid hormone biosynthesis, facilitates iodide salvage by catalysing the oxidative NADPH-dependent deiodination of the halogenated by-products of thyroid hormone production, monoiodotyrosine (L-MIT) and diiodotyrosine (L-DIT) (PubMed:15289438). The scavanged iodide can then reenter the hormone-producing pathways (By similarity). Acts more efficiently on 3-iodo-L-tyrosine than 3,5-diiodo-L-tyrosine (By similarity).</text>
</comment>
<comment type="catalytic activity">
    <reaction evidence="4">
        <text>2 iodide + L-tyrosine + 2 NADP(+) = 3,5-diiodo-L-tyrosine + 2 NADPH + H(+)</text>
        <dbReference type="Rhea" id="RHEA:32479"/>
        <dbReference type="ChEBI" id="CHEBI:15378"/>
        <dbReference type="ChEBI" id="CHEBI:16382"/>
        <dbReference type="ChEBI" id="CHEBI:57506"/>
        <dbReference type="ChEBI" id="CHEBI:57783"/>
        <dbReference type="ChEBI" id="CHEBI:58315"/>
        <dbReference type="ChEBI" id="CHEBI:58349"/>
        <dbReference type="EC" id="1.21.1.1"/>
    </reaction>
</comment>
<comment type="catalytic activity">
    <reaction evidence="1">
        <text>iodide + L-tyrosine + NADP(+) = 3-iodo-L-tyrosine + NADPH</text>
        <dbReference type="Rhea" id="RHEA:27453"/>
        <dbReference type="ChEBI" id="CHEBI:16382"/>
        <dbReference type="ChEBI" id="CHEBI:57783"/>
        <dbReference type="ChEBI" id="CHEBI:58315"/>
        <dbReference type="ChEBI" id="CHEBI:58349"/>
        <dbReference type="ChEBI" id="CHEBI:59898"/>
    </reaction>
    <physiologicalReaction direction="right-to-left" evidence="1">
        <dbReference type="Rhea" id="RHEA:27455"/>
    </physiologicalReaction>
</comment>
<comment type="catalytic activity">
    <reaction evidence="1">
        <text>3-iodo-L-tyrosine + iodide + NADP(+) = 3,5-diiodo-L-tyrosine + NADPH + H(+)</text>
        <dbReference type="Rhea" id="RHEA:27457"/>
        <dbReference type="ChEBI" id="CHEBI:15378"/>
        <dbReference type="ChEBI" id="CHEBI:16382"/>
        <dbReference type="ChEBI" id="CHEBI:57506"/>
        <dbReference type="ChEBI" id="CHEBI:57783"/>
        <dbReference type="ChEBI" id="CHEBI:58349"/>
        <dbReference type="ChEBI" id="CHEBI:59898"/>
    </reaction>
    <physiologicalReaction direction="right-to-left" evidence="1">
        <dbReference type="Rhea" id="RHEA:27459"/>
    </physiologicalReaction>
</comment>
<comment type="catalytic activity">
    <reaction evidence="1">
        <text>L-tyrosine + chloride + NADP(+) = 3-chloro-L-tyrosine + NADPH</text>
        <dbReference type="Rhea" id="RHEA:70343"/>
        <dbReference type="ChEBI" id="CHEBI:17996"/>
        <dbReference type="ChEBI" id="CHEBI:57783"/>
        <dbReference type="ChEBI" id="CHEBI:58315"/>
        <dbReference type="ChEBI" id="CHEBI:58349"/>
        <dbReference type="ChEBI" id="CHEBI:189422"/>
    </reaction>
    <physiologicalReaction direction="right-to-left" evidence="1">
        <dbReference type="Rhea" id="RHEA:70345"/>
    </physiologicalReaction>
</comment>
<comment type="catalytic activity">
    <reaction evidence="1">
        <text>bromide + L-tyrosine + NADP(+) = 3-bromo-L-tyrosine + NADPH</text>
        <dbReference type="Rhea" id="RHEA:70347"/>
        <dbReference type="ChEBI" id="CHEBI:15858"/>
        <dbReference type="ChEBI" id="CHEBI:57783"/>
        <dbReference type="ChEBI" id="CHEBI:58315"/>
        <dbReference type="ChEBI" id="CHEBI:58349"/>
        <dbReference type="ChEBI" id="CHEBI:189423"/>
    </reaction>
    <physiologicalReaction direction="right-to-left" evidence="1">
        <dbReference type="Rhea" id="RHEA:70349"/>
    </physiologicalReaction>
</comment>
<comment type="cofactor">
    <cofactor evidence="1">
        <name>FMN</name>
        <dbReference type="ChEBI" id="CHEBI:58210"/>
    </cofactor>
</comment>
<comment type="subunit">
    <text evidence="1">Homodimer.</text>
</comment>
<comment type="subcellular location">
    <subcellularLocation>
        <location evidence="4">Cell membrane</location>
        <topology evidence="1">Single-pass membrane protein</topology>
    </subcellularLocation>
    <subcellularLocation>
        <location evidence="1">Cytoplasmic vesicle membrane</location>
    </subcellularLocation>
</comment>
<comment type="tissue specificity">
    <text evidence="4">Detected in thyroid (at protein level).</text>
</comment>
<comment type="similarity">
    <text evidence="6">Belongs to the nitroreductase family.</text>
</comment>
<gene>
    <name type="primary">IYD</name>
    <name type="synonym">DEHAL1</name>
</gene>
<protein>
    <recommendedName>
        <fullName evidence="1">Iodotyrosine deiodinase 1</fullName>
        <shortName evidence="1">IYD-1</shortName>
        <ecNumber evidence="4">1.21.1.1</ecNumber>
    </recommendedName>
    <alternativeName>
        <fullName evidence="5">Iodotyrosine dehalogenase 1</fullName>
    </alternativeName>
</protein>
<reference key="1">
    <citation type="journal article" date="2004" name="FASEB J.">
        <title>Iodotyrosine dehalogenase 1 (DEHAL1) is a transmembrane protein involved in the recycling of iodide close to the thyroglobulin iodination site.</title>
        <authorList>
            <person name="Gnidehou S."/>
            <person name="Caillou B."/>
            <person name="Talbot M."/>
            <person name="Ohayon R."/>
            <person name="Kaniewski J."/>
            <person name="Noel-Hudson M.-S."/>
            <person name="Morand S."/>
            <person name="Agnangji D."/>
            <person name="Sezan A."/>
            <person name="Courtin F."/>
            <person name="Virion A."/>
            <person name="Dupuy C."/>
        </authorList>
    </citation>
    <scope>NUCLEOTIDE SEQUENCE [MRNA]</scope>
    <scope>FUNCTION</scope>
    <scope>CATALYTIC ACTIVITY</scope>
    <scope>SUBCELLULAR LOCATION</scope>
    <scope>TISSUE SPECIFICITY</scope>
    <source>
        <tissue>Thyroid</tissue>
    </source>
</reference>
<feature type="chain" id="PRO_0000230280" description="Iodotyrosine deiodinase 1">
    <location>
        <begin position="1"/>
        <end position="289"/>
    </location>
</feature>
<feature type="transmembrane region" description="Helical" evidence="3">
    <location>
        <begin position="1"/>
        <end position="21"/>
    </location>
</feature>
<feature type="binding site" evidence="2">
    <location>
        <begin position="100"/>
        <end position="104"/>
    </location>
    <ligand>
        <name>FMN</name>
        <dbReference type="ChEBI" id="CHEBI:58210"/>
    </ligand>
</feature>
<feature type="binding site" evidence="2">
    <location>
        <begin position="128"/>
        <end position="129"/>
    </location>
    <ligand>
        <name>FMN</name>
        <dbReference type="ChEBI" id="CHEBI:58210"/>
    </ligand>
</feature>
<feature type="binding site" evidence="2">
    <location>
        <position position="130"/>
    </location>
    <ligand>
        <name>3,5-diiodo-L-tyrosine</name>
        <dbReference type="ChEBI" id="CHEBI:57506"/>
    </ligand>
</feature>
<feature type="binding site" evidence="2">
    <location>
        <position position="130"/>
    </location>
    <ligand>
        <name>3-iodo-L-tyrosine</name>
        <dbReference type="ChEBI" id="CHEBI:59898"/>
    </ligand>
</feature>
<feature type="binding site" evidence="2">
    <location>
        <position position="157"/>
    </location>
    <ligand>
        <name>3,5-diiodo-L-tyrosine</name>
        <dbReference type="ChEBI" id="CHEBI:57506"/>
    </ligand>
</feature>
<feature type="binding site" evidence="2">
    <location>
        <position position="157"/>
    </location>
    <ligand>
        <name>3-iodo-L-tyrosine</name>
        <dbReference type="ChEBI" id="CHEBI:59898"/>
    </ligand>
</feature>
<feature type="binding site" evidence="2">
    <location>
        <position position="161"/>
    </location>
    <ligand>
        <name>3,5-diiodo-L-tyrosine</name>
        <dbReference type="ChEBI" id="CHEBI:57506"/>
    </ligand>
</feature>
<feature type="binding site" evidence="2">
    <location>
        <position position="161"/>
    </location>
    <ligand>
        <name>3-iodo-L-tyrosine</name>
        <dbReference type="ChEBI" id="CHEBI:59898"/>
    </ligand>
</feature>
<feature type="binding site" evidence="2">
    <location>
        <position position="182"/>
    </location>
    <ligand>
        <name>3,5-diiodo-L-tyrosine</name>
        <dbReference type="ChEBI" id="CHEBI:57506"/>
    </ligand>
</feature>
<feature type="binding site" evidence="2">
    <location>
        <position position="182"/>
    </location>
    <ligand>
        <name>3-iodo-L-tyrosine</name>
        <dbReference type="ChEBI" id="CHEBI:59898"/>
    </ligand>
</feature>
<feature type="binding site" evidence="2">
    <location>
        <begin position="237"/>
        <end position="239"/>
    </location>
    <ligand>
        <name>FMN</name>
        <dbReference type="ChEBI" id="CHEBI:58210"/>
    </ligand>
</feature>
<feature type="binding site" evidence="2">
    <location>
        <position position="279"/>
    </location>
    <ligand>
        <name>FMN</name>
        <dbReference type="ChEBI" id="CHEBI:58210"/>
    </ligand>
</feature>
<dbReference type="EC" id="1.21.1.1" evidence="4"/>
<dbReference type="EMBL" id="AY426609">
    <property type="protein sequence ID" value="AAR83926.1"/>
    <property type="molecule type" value="mRNA"/>
</dbReference>
<dbReference type="RefSeq" id="NP_999581.1">
    <property type="nucleotide sequence ID" value="NM_214416.1"/>
</dbReference>
<dbReference type="SMR" id="Q6TA49"/>
<dbReference type="FunCoup" id="Q6TA49">
    <property type="interactions" value="90"/>
</dbReference>
<dbReference type="STRING" id="9823.ENSSSCP00000058555"/>
<dbReference type="PaxDb" id="9823-ENSSSCP00000004423"/>
<dbReference type="GeneID" id="403124"/>
<dbReference type="KEGG" id="ssc:403124"/>
<dbReference type="CTD" id="389434"/>
<dbReference type="eggNOG" id="KOG3936">
    <property type="taxonomic scope" value="Eukaryota"/>
</dbReference>
<dbReference type="InParanoid" id="Q6TA49"/>
<dbReference type="OrthoDB" id="41362at2759"/>
<dbReference type="BRENDA" id="1.21.1.1">
    <property type="organism ID" value="6170"/>
</dbReference>
<dbReference type="Proteomes" id="UP000008227">
    <property type="component" value="Unplaced"/>
</dbReference>
<dbReference type="Proteomes" id="UP000314985">
    <property type="component" value="Unplaced"/>
</dbReference>
<dbReference type="Proteomes" id="UP000694570">
    <property type="component" value="Unplaced"/>
</dbReference>
<dbReference type="Proteomes" id="UP000694571">
    <property type="component" value="Unplaced"/>
</dbReference>
<dbReference type="Proteomes" id="UP000694720">
    <property type="component" value="Unplaced"/>
</dbReference>
<dbReference type="Proteomes" id="UP000694722">
    <property type="component" value="Unplaced"/>
</dbReference>
<dbReference type="Proteomes" id="UP000694723">
    <property type="component" value="Unplaced"/>
</dbReference>
<dbReference type="Proteomes" id="UP000694724">
    <property type="component" value="Unplaced"/>
</dbReference>
<dbReference type="Proteomes" id="UP000694725">
    <property type="component" value="Unplaced"/>
</dbReference>
<dbReference type="Proteomes" id="UP000694726">
    <property type="component" value="Unplaced"/>
</dbReference>
<dbReference type="Proteomes" id="UP000694727">
    <property type="component" value="Unplaced"/>
</dbReference>
<dbReference type="Proteomes" id="UP000694728">
    <property type="component" value="Unplaced"/>
</dbReference>
<dbReference type="GO" id="GO:0030659">
    <property type="term" value="C:cytoplasmic vesicle membrane"/>
    <property type="evidence" value="ECO:0000250"/>
    <property type="project" value="UniProtKB"/>
</dbReference>
<dbReference type="GO" id="GO:0005886">
    <property type="term" value="C:plasma membrane"/>
    <property type="evidence" value="ECO:0000314"/>
    <property type="project" value="UniProtKB"/>
</dbReference>
<dbReference type="GO" id="GO:0010181">
    <property type="term" value="F:FMN binding"/>
    <property type="evidence" value="ECO:0000250"/>
    <property type="project" value="UniProtKB"/>
</dbReference>
<dbReference type="GO" id="GO:0140616">
    <property type="term" value="F:iodotyrosine deiodinase activity"/>
    <property type="evidence" value="ECO:0000314"/>
    <property type="project" value="UniProtKB"/>
</dbReference>
<dbReference type="GO" id="GO:0016491">
    <property type="term" value="F:oxidoreductase activity"/>
    <property type="evidence" value="ECO:0000318"/>
    <property type="project" value="GO_Central"/>
</dbReference>
<dbReference type="GO" id="GO:0042403">
    <property type="term" value="P:thyroid hormone metabolic process"/>
    <property type="evidence" value="ECO:0000314"/>
    <property type="project" value="UniProtKB"/>
</dbReference>
<dbReference type="GO" id="GO:0006570">
    <property type="term" value="P:tyrosine metabolic process"/>
    <property type="evidence" value="ECO:0000314"/>
    <property type="project" value="UniProtKB"/>
</dbReference>
<dbReference type="CDD" id="cd02144">
    <property type="entry name" value="iodotyrosine_dehalogenase"/>
    <property type="match status" value="1"/>
</dbReference>
<dbReference type="FunFam" id="3.40.109.10:FF:000004">
    <property type="entry name" value="Iodotyrosine deiodinase 1"/>
    <property type="match status" value="1"/>
</dbReference>
<dbReference type="Gene3D" id="3.40.109.10">
    <property type="entry name" value="NADH Oxidase"/>
    <property type="match status" value="1"/>
</dbReference>
<dbReference type="InterPro" id="IPR029479">
    <property type="entry name" value="Nitroreductase"/>
</dbReference>
<dbReference type="InterPro" id="IPR000415">
    <property type="entry name" value="Nitroreductase-like"/>
</dbReference>
<dbReference type="InterPro" id="IPR050627">
    <property type="entry name" value="Nitroreductase/BluB"/>
</dbReference>
<dbReference type="PANTHER" id="PTHR23026:SF90">
    <property type="entry name" value="IODOTYROSINE DEIODINASE 1"/>
    <property type="match status" value="1"/>
</dbReference>
<dbReference type="PANTHER" id="PTHR23026">
    <property type="entry name" value="NADPH NITROREDUCTASE"/>
    <property type="match status" value="1"/>
</dbReference>
<dbReference type="Pfam" id="PF00881">
    <property type="entry name" value="Nitroreductase"/>
    <property type="match status" value="1"/>
</dbReference>
<dbReference type="SUPFAM" id="SSF55469">
    <property type="entry name" value="FMN-dependent nitroreductase-like"/>
    <property type="match status" value="1"/>
</dbReference>
<keyword id="KW-1003">Cell membrane</keyword>
<keyword id="KW-0968">Cytoplasmic vesicle</keyword>
<keyword id="KW-0285">Flavoprotein</keyword>
<keyword id="KW-0288">FMN</keyword>
<keyword id="KW-0472">Membrane</keyword>
<keyword id="KW-0521">NADP</keyword>
<keyword id="KW-0560">Oxidoreductase</keyword>
<keyword id="KW-1185">Reference proteome</keyword>
<keyword id="KW-0812">Transmembrane</keyword>
<keyword id="KW-1133">Transmembrane helix</keyword>
<accession>Q6TA49</accession>
<proteinExistence type="evidence at protein level"/>